<gene>
    <name evidence="13" type="primary">PREX2</name>
    <name type="synonym">DEPDC2</name>
</gene>
<reference key="1">
    <citation type="journal article" date="2004" name="FEBS Lett.">
        <title>P-Rex2, a new guanine-nucleotide exchange factor for Rac.</title>
        <authorList>
            <person name="Donald S."/>
            <person name="Hill K."/>
            <person name="Lecureuil C."/>
            <person name="Barnouin R."/>
            <person name="Krugmann S."/>
            <person name="John Coadwell W."/>
            <person name="Andrews S.R."/>
            <person name="Walker S.A."/>
            <person name="Hawkins P.T."/>
            <person name="Stephens L.R."/>
            <person name="Welch H.C.E."/>
        </authorList>
    </citation>
    <scope>NUCLEOTIDE SEQUENCE [MRNA] (ISOFORM 1)</scope>
    <scope>FUNCTION</scope>
    <scope>TISSUE SPECIFICITY</scope>
    <source>
        <tissue>Brain</tissue>
        <tissue>Skeletal muscle</tissue>
    </source>
</reference>
<reference key="2">
    <citation type="submission" date="2003-12" db="EMBL/GenBank/DDBJ databases">
        <title>Cloning and characterization of P-Rex2: an inositol polyphosphate 4-phosphatase domain containing guanine nucleotide exchange factor.</title>
        <authorList>
            <person name="Joseph R.E."/>
            <person name="Norris F.A."/>
        </authorList>
    </citation>
    <scope>NUCLEOTIDE SEQUENCE [MRNA] (ISOFORMS 1 AND 3)</scope>
    <source>
        <tissue>Mammary gland</tissue>
    </source>
</reference>
<reference key="3">
    <citation type="journal article" date="2006" name="Nature">
        <title>DNA sequence and analysis of human chromosome 8.</title>
        <authorList>
            <person name="Nusbaum C."/>
            <person name="Mikkelsen T.S."/>
            <person name="Zody M.C."/>
            <person name="Asakawa S."/>
            <person name="Taudien S."/>
            <person name="Garber M."/>
            <person name="Kodira C.D."/>
            <person name="Schueler M.G."/>
            <person name="Shimizu A."/>
            <person name="Whittaker C.A."/>
            <person name="Chang J.L."/>
            <person name="Cuomo C.A."/>
            <person name="Dewar K."/>
            <person name="FitzGerald M.G."/>
            <person name="Yang X."/>
            <person name="Allen N.R."/>
            <person name="Anderson S."/>
            <person name="Asakawa T."/>
            <person name="Blechschmidt K."/>
            <person name="Bloom T."/>
            <person name="Borowsky M.L."/>
            <person name="Butler J."/>
            <person name="Cook A."/>
            <person name="Corum B."/>
            <person name="DeArellano K."/>
            <person name="DeCaprio D."/>
            <person name="Dooley K.T."/>
            <person name="Dorris L. III"/>
            <person name="Engels R."/>
            <person name="Gloeckner G."/>
            <person name="Hafez N."/>
            <person name="Hagopian D.S."/>
            <person name="Hall J.L."/>
            <person name="Ishikawa S.K."/>
            <person name="Jaffe D.B."/>
            <person name="Kamat A."/>
            <person name="Kudoh J."/>
            <person name="Lehmann R."/>
            <person name="Lokitsang T."/>
            <person name="Macdonald P."/>
            <person name="Major J.E."/>
            <person name="Matthews C.D."/>
            <person name="Mauceli E."/>
            <person name="Menzel U."/>
            <person name="Mihalev A.H."/>
            <person name="Minoshima S."/>
            <person name="Murayama Y."/>
            <person name="Naylor J.W."/>
            <person name="Nicol R."/>
            <person name="Nguyen C."/>
            <person name="O'Leary S.B."/>
            <person name="O'Neill K."/>
            <person name="Parker S.C.J."/>
            <person name="Polley A."/>
            <person name="Raymond C.K."/>
            <person name="Reichwald K."/>
            <person name="Rodriguez J."/>
            <person name="Sasaki T."/>
            <person name="Schilhabel M."/>
            <person name="Siddiqui R."/>
            <person name="Smith C.L."/>
            <person name="Sneddon T.P."/>
            <person name="Talamas J.A."/>
            <person name="Tenzin P."/>
            <person name="Topham K."/>
            <person name="Venkataraman V."/>
            <person name="Wen G."/>
            <person name="Yamazaki S."/>
            <person name="Young S.K."/>
            <person name="Zeng Q."/>
            <person name="Zimmer A.R."/>
            <person name="Rosenthal A."/>
            <person name="Birren B.W."/>
            <person name="Platzer M."/>
            <person name="Shimizu N."/>
            <person name="Lander E.S."/>
        </authorList>
    </citation>
    <scope>NUCLEOTIDE SEQUENCE [LARGE SCALE GENOMIC DNA]</scope>
</reference>
<reference key="4">
    <citation type="journal article" date="2004" name="Nat. Genet.">
        <title>Complete sequencing and characterization of 21,243 full-length human cDNAs.</title>
        <authorList>
            <person name="Ota T."/>
            <person name="Suzuki Y."/>
            <person name="Nishikawa T."/>
            <person name="Otsuki T."/>
            <person name="Sugiyama T."/>
            <person name="Irie R."/>
            <person name="Wakamatsu A."/>
            <person name="Hayashi K."/>
            <person name="Sato H."/>
            <person name="Nagai K."/>
            <person name="Kimura K."/>
            <person name="Makita H."/>
            <person name="Sekine M."/>
            <person name="Obayashi M."/>
            <person name="Nishi T."/>
            <person name="Shibahara T."/>
            <person name="Tanaka T."/>
            <person name="Ishii S."/>
            <person name="Yamamoto J."/>
            <person name="Saito K."/>
            <person name="Kawai Y."/>
            <person name="Isono Y."/>
            <person name="Nakamura Y."/>
            <person name="Nagahari K."/>
            <person name="Murakami K."/>
            <person name="Yasuda T."/>
            <person name="Iwayanagi T."/>
            <person name="Wagatsuma M."/>
            <person name="Shiratori A."/>
            <person name="Sudo H."/>
            <person name="Hosoiri T."/>
            <person name="Kaku Y."/>
            <person name="Kodaira H."/>
            <person name="Kondo H."/>
            <person name="Sugawara M."/>
            <person name="Takahashi M."/>
            <person name="Kanda K."/>
            <person name="Yokoi T."/>
            <person name="Furuya T."/>
            <person name="Kikkawa E."/>
            <person name="Omura Y."/>
            <person name="Abe K."/>
            <person name="Kamihara K."/>
            <person name="Katsuta N."/>
            <person name="Sato K."/>
            <person name="Tanikawa M."/>
            <person name="Yamazaki M."/>
            <person name="Ninomiya K."/>
            <person name="Ishibashi T."/>
            <person name="Yamashita H."/>
            <person name="Murakawa K."/>
            <person name="Fujimori K."/>
            <person name="Tanai H."/>
            <person name="Kimata M."/>
            <person name="Watanabe M."/>
            <person name="Hiraoka S."/>
            <person name="Chiba Y."/>
            <person name="Ishida S."/>
            <person name="Ono Y."/>
            <person name="Takiguchi S."/>
            <person name="Watanabe S."/>
            <person name="Yosida M."/>
            <person name="Hotuta T."/>
            <person name="Kusano J."/>
            <person name="Kanehori K."/>
            <person name="Takahashi-Fujii A."/>
            <person name="Hara H."/>
            <person name="Tanase T.-O."/>
            <person name="Nomura Y."/>
            <person name="Togiya S."/>
            <person name="Komai F."/>
            <person name="Hara R."/>
            <person name="Takeuchi K."/>
            <person name="Arita M."/>
            <person name="Imose N."/>
            <person name="Musashino K."/>
            <person name="Yuuki H."/>
            <person name="Oshima A."/>
            <person name="Sasaki N."/>
            <person name="Aotsuka S."/>
            <person name="Yoshikawa Y."/>
            <person name="Matsunawa H."/>
            <person name="Ichihara T."/>
            <person name="Shiohata N."/>
            <person name="Sano S."/>
            <person name="Moriya S."/>
            <person name="Momiyama H."/>
            <person name="Satoh N."/>
            <person name="Takami S."/>
            <person name="Terashima Y."/>
            <person name="Suzuki O."/>
            <person name="Nakagawa S."/>
            <person name="Senoh A."/>
            <person name="Mizoguchi H."/>
            <person name="Goto Y."/>
            <person name="Shimizu F."/>
            <person name="Wakebe H."/>
            <person name="Hishigaki H."/>
            <person name="Watanabe T."/>
            <person name="Sugiyama A."/>
            <person name="Takemoto M."/>
            <person name="Kawakami B."/>
            <person name="Yamazaki M."/>
            <person name="Watanabe K."/>
            <person name="Kumagai A."/>
            <person name="Itakura S."/>
            <person name="Fukuzumi Y."/>
            <person name="Fujimori Y."/>
            <person name="Komiyama M."/>
            <person name="Tashiro H."/>
            <person name="Tanigami A."/>
            <person name="Fujiwara T."/>
            <person name="Ono T."/>
            <person name="Yamada K."/>
            <person name="Fujii Y."/>
            <person name="Ozaki K."/>
            <person name="Hirao M."/>
            <person name="Ohmori Y."/>
            <person name="Kawabata A."/>
            <person name="Hikiji T."/>
            <person name="Kobatake N."/>
            <person name="Inagaki H."/>
            <person name="Ikema Y."/>
            <person name="Okamoto S."/>
            <person name="Okitani R."/>
            <person name="Kawakami T."/>
            <person name="Noguchi S."/>
            <person name="Itoh T."/>
            <person name="Shigeta K."/>
            <person name="Senba T."/>
            <person name="Matsumura K."/>
            <person name="Nakajima Y."/>
            <person name="Mizuno T."/>
            <person name="Morinaga M."/>
            <person name="Sasaki M."/>
            <person name="Togashi T."/>
            <person name="Oyama M."/>
            <person name="Hata H."/>
            <person name="Watanabe M."/>
            <person name="Komatsu T."/>
            <person name="Mizushima-Sugano J."/>
            <person name="Satoh T."/>
            <person name="Shirai Y."/>
            <person name="Takahashi Y."/>
            <person name="Nakagawa K."/>
            <person name="Okumura K."/>
            <person name="Nagase T."/>
            <person name="Nomura N."/>
            <person name="Kikuchi H."/>
            <person name="Masuho Y."/>
            <person name="Yamashita R."/>
            <person name="Nakai K."/>
            <person name="Yada T."/>
            <person name="Nakamura Y."/>
            <person name="Ohara O."/>
            <person name="Isogai T."/>
            <person name="Sugano S."/>
        </authorList>
    </citation>
    <scope>NUCLEOTIDE SEQUENCE [LARGE SCALE MRNA] OF 33-1606 (ISOFORM 4)</scope>
    <scope>NUCLEOTIDE SEQUENCE [LARGE SCALE MRNA] OF 216-1588 (ISOFORM 3)</scope>
    <scope>NUCLEOTIDE SEQUENCE [LARGE SCALE MRNA] OF 549-1588 (ISOFORM 1)</scope>
    <source>
        <tissue>Embryo</tissue>
        <tissue>Teratocarcinoma</tissue>
    </source>
</reference>
<reference key="5">
    <citation type="journal article" date="2004" name="FEBS Lett.">
        <title>P-REX2, a novel PI-3-kinase sensitive Rac exchange factor.</title>
        <authorList>
            <person name="Rosenfeldt H."/>
            <person name="Vazquez-Prado J."/>
            <person name="Gutkind J.S."/>
        </authorList>
    </citation>
    <scope>IDENTIFICATION (ISOFORM 3)</scope>
    <scope>FUNCTION</scope>
    <scope>ALTERNATIVE SPLICING</scope>
</reference>
<reference key="6">
    <citation type="journal article" date="2005" name="J. Biol. Chem.">
        <title>Substrate specificity and recognition is conferred by the pleckstrin homology domain of the Dbl family guanine nucleotide exchange factor P-Rex2.</title>
        <authorList>
            <person name="Joseph R.E."/>
            <person name="Norris F.A."/>
        </authorList>
    </citation>
    <scope>FUNCTION</scope>
</reference>
<reference key="7">
    <citation type="journal article" date="2006" name="Science">
        <title>The consensus coding sequences of human breast and colorectal cancers.</title>
        <authorList>
            <person name="Sjoeblom T."/>
            <person name="Jones S."/>
            <person name="Wood L.D."/>
            <person name="Parsons D.W."/>
            <person name="Lin J."/>
            <person name="Barber T.D."/>
            <person name="Mandelker D."/>
            <person name="Leary R.J."/>
            <person name="Ptak J."/>
            <person name="Silliman N."/>
            <person name="Szabo S."/>
            <person name="Buckhaults P."/>
            <person name="Farrell C."/>
            <person name="Meeh P."/>
            <person name="Markowitz S.D."/>
            <person name="Willis J."/>
            <person name="Dawson D."/>
            <person name="Willson J.K.V."/>
            <person name="Gazdar A.F."/>
            <person name="Hartigan J."/>
            <person name="Wu L."/>
            <person name="Liu C."/>
            <person name="Parmigiani G."/>
            <person name="Park B.H."/>
            <person name="Bachman K.E."/>
            <person name="Papadopoulos N."/>
            <person name="Vogelstein B."/>
            <person name="Kinzler K.W."/>
            <person name="Velculescu V.E."/>
        </authorList>
    </citation>
    <scope>VARIANTS [LARGE SCALE ANALYSIS] ILE-537 AND GLU-1571</scope>
</reference>
<dbReference type="EMBL" id="AJ437636">
    <property type="protein sequence ID" value="CAD26885.2"/>
    <property type="molecule type" value="mRNA"/>
</dbReference>
<dbReference type="EMBL" id="AY508996">
    <property type="protein sequence ID" value="AAS82571.1"/>
    <property type="molecule type" value="mRNA"/>
</dbReference>
<dbReference type="EMBL" id="AY508997">
    <property type="protein sequence ID" value="AAS82572.1"/>
    <property type="molecule type" value="mRNA"/>
</dbReference>
<dbReference type="EMBL" id="AC011853">
    <property type="status" value="NOT_ANNOTATED_CDS"/>
    <property type="molecule type" value="Genomic_DNA"/>
</dbReference>
<dbReference type="EMBL" id="AC103783">
    <property type="status" value="NOT_ANNOTATED_CDS"/>
    <property type="molecule type" value="Genomic_DNA"/>
</dbReference>
<dbReference type="EMBL" id="AC104416">
    <property type="status" value="NOT_ANNOTATED_CDS"/>
    <property type="molecule type" value="Genomic_DNA"/>
</dbReference>
<dbReference type="EMBL" id="AK023049">
    <property type="protein sequence ID" value="BAB14375.1"/>
    <property type="status" value="ALT_INIT"/>
    <property type="molecule type" value="mRNA"/>
</dbReference>
<dbReference type="EMBL" id="AK024079">
    <property type="status" value="NOT_ANNOTATED_CDS"/>
    <property type="molecule type" value="mRNA"/>
</dbReference>
<dbReference type="EMBL" id="AK294299">
    <property type="protein sequence ID" value="BAG57581.1"/>
    <property type="status" value="ALT_INIT"/>
    <property type="molecule type" value="mRNA"/>
</dbReference>
<dbReference type="EMBL" id="BK005160">
    <property type="protein sequence ID" value="DAA05333.1"/>
    <property type="molecule type" value="mRNA"/>
</dbReference>
<dbReference type="EMBL" id="BK005161">
    <property type="protein sequence ID" value="DAA05334.1"/>
    <property type="status" value="ALT_SEQ"/>
    <property type="molecule type" value="mRNA"/>
</dbReference>
<dbReference type="CCDS" id="CCDS6201.1">
    <molecule id="Q70Z35-1"/>
</dbReference>
<dbReference type="RefSeq" id="NP_079146.2">
    <molecule id="Q70Z35-1"/>
    <property type="nucleotide sequence ID" value="NM_024870.3"/>
</dbReference>
<dbReference type="RefSeq" id="NP_079446.3">
    <molecule id="Q70Z35-3"/>
    <property type="nucleotide sequence ID" value="NM_025170.5"/>
</dbReference>
<dbReference type="PDB" id="6BNM">
    <property type="method" value="X-ray"/>
    <property type="resolution" value="1.90 A"/>
    <property type="chains" value="A=219-377"/>
</dbReference>
<dbReference type="PDBsum" id="6BNM"/>
<dbReference type="SMR" id="Q70Z35"/>
<dbReference type="BioGRID" id="123199">
    <property type="interactions" value="15"/>
</dbReference>
<dbReference type="CORUM" id="Q70Z35"/>
<dbReference type="FunCoup" id="Q70Z35">
    <property type="interactions" value="440"/>
</dbReference>
<dbReference type="IntAct" id="Q70Z35">
    <property type="interactions" value="10"/>
</dbReference>
<dbReference type="STRING" id="9606.ENSP00000288368"/>
<dbReference type="GlyCosmos" id="Q70Z35">
    <property type="glycosylation" value="1 site, 1 glycan"/>
</dbReference>
<dbReference type="GlyGen" id="Q70Z35">
    <property type="glycosylation" value="2 sites, 1 N-linked glycan (1 site), 1 O-linked glycan (1 site)"/>
</dbReference>
<dbReference type="iPTMnet" id="Q70Z35"/>
<dbReference type="PhosphoSitePlus" id="Q70Z35"/>
<dbReference type="BioMuta" id="PREX2"/>
<dbReference type="DMDM" id="74758897"/>
<dbReference type="MassIVE" id="Q70Z35"/>
<dbReference type="PaxDb" id="9606-ENSP00000288368"/>
<dbReference type="PeptideAtlas" id="Q70Z35"/>
<dbReference type="ProteomicsDB" id="68577">
    <molecule id="Q70Z35-1"/>
</dbReference>
<dbReference type="ProteomicsDB" id="68579">
    <molecule id="Q70Z35-3"/>
</dbReference>
<dbReference type="Pumba" id="Q70Z35"/>
<dbReference type="Antibodypedia" id="2764">
    <property type="antibodies" value="71 antibodies from 17 providers"/>
</dbReference>
<dbReference type="DNASU" id="80243"/>
<dbReference type="Ensembl" id="ENST00000288368.5">
    <molecule id="Q70Z35-1"/>
    <property type="protein sequence ID" value="ENSP00000288368.4"/>
    <property type="gene ID" value="ENSG00000046889.19"/>
</dbReference>
<dbReference type="GeneID" id="80243"/>
<dbReference type="KEGG" id="hsa:80243"/>
<dbReference type="MANE-Select" id="ENST00000288368.5">
    <property type="protein sequence ID" value="ENSP00000288368.4"/>
    <property type="RefSeq nucleotide sequence ID" value="NM_024870.4"/>
    <property type="RefSeq protein sequence ID" value="NP_079146.2"/>
</dbReference>
<dbReference type="UCSC" id="uc003xxv.2">
    <molecule id="Q70Z35-1"/>
    <property type="organism name" value="human"/>
</dbReference>
<dbReference type="AGR" id="HGNC:22950"/>
<dbReference type="CTD" id="80243"/>
<dbReference type="DisGeNET" id="80243"/>
<dbReference type="GeneCards" id="PREX2"/>
<dbReference type="HGNC" id="HGNC:22950">
    <property type="gene designation" value="PREX2"/>
</dbReference>
<dbReference type="HPA" id="ENSG00000046889">
    <property type="expression patterns" value="Low tissue specificity"/>
</dbReference>
<dbReference type="MalaCards" id="PREX2"/>
<dbReference type="MIM" id="612139">
    <property type="type" value="gene"/>
</dbReference>
<dbReference type="neXtProt" id="NX_Q70Z35"/>
<dbReference type="OpenTargets" id="ENSG00000046889"/>
<dbReference type="PharmGKB" id="PA164725103"/>
<dbReference type="VEuPathDB" id="HostDB:ENSG00000046889"/>
<dbReference type="eggNOG" id="KOG3519">
    <property type="taxonomic scope" value="Eukaryota"/>
</dbReference>
<dbReference type="eggNOG" id="KOG4428">
    <property type="taxonomic scope" value="Eukaryota"/>
</dbReference>
<dbReference type="GeneTree" id="ENSGT00940000155894"/>
<dbReference type="HOGENOM" id="CLU_003935_0_0_1"/>
<dbReference type="InParanoid" id="Q70Z35"/>
<dbReference type="OMA" id="SNRDSYX"/>
<dbReference type="OrthoDB" id="660555at2759"/>
<dbReference type="PAN-GO" id="Q70Z35">
    <property type="GO annotations" value="2 GO annotations based on evolutionary models"/>
</dbReference>
<dbReference type="PhylomeDB" id="Q70Z35"/>
<dbReference type="TreeFam" id="TF328639"/>
<dbReference type="PathwayCommons" id="Q70Z35"/>
<dbReference type="Reactome" id="R-HSA-8948751">
    <property type="pathway name" value="Regulation of PTEN stability and activity"/>
</dbReference>
<dbReference type="Reactome" id="R-HSA-8980692">
    <property type="pathway name" value="RHOA GTPase cycle"/>
</dbReference>
<dbReference type="Reactome" id="R-HSA-9013148">
    <property type="pathway name" value="CDC42 GTPase cycle"/>
</dbReference>
<dbReference type="Reactome" id="R-HSA-9013149">
    <property type="pathway name" value="RAC1 GTPase cycle"/>
</dbReference>
<dbReference type="SignaLink" id="Q70Z35"/>
<dbReference type="SIGNOR" id="Q70Z35"/>
<dbReference type="BioGRID-ORCS" id="80243">
    <property type="hits" value="15 hits in 1148 CRISPR screens"/>
</dbReference>
<dbReference type="ChiTaRS" id="PREX2">
    <property type="organism name" value="human"/>
</dbReference>
<dbReference type="GeneWiki" id="PREX2"/>
<dbReference type="GenomeRNAi" id="80243"/>
<dbReference type="Pharos" id="Q70Z35">
    <property type="development level" value="Tbio"/>
</dbReference>
<dbReference type="PRO" id="PR:Q70Z35"/>
<dbReference type="Proteomes" id="UP000005640">
    <property type="component" value="Chromosome 8"/>
</dbReference>
<dbReference type="RNAct" id="Q70Z35">
    <property type="molecule type" value="protein"/>
</dbReference>
<dbReference type="Bgee" id="ENSG00000046889">
    <property type="expression patterns" value="Expressed in calcaneal tendon and 163 other cell types or tissues"/>
</dbReference>
<dbReference type="GO" id="GO:0005829">
    <property type="term" value="C:cytosol"/>
    <property type="evidence" value="ECO:0000304"/>
    <property type="project" value="Reactome"/>
</dbReference>
<dbReference type="GO" id="GO:0005886">
    <property type="term" value="C:plasma membrane"/>
    <property type="evidence" value="ECO:0000318"/>
    <property type="project" value="GO_Central"/>
</dbReference>
<dbReference type="GO" id="GO:0005096">
    <property type="term" value="F:GTPase activator activity"/>
    <property type="evidence" value="ECO:0000314"/>
    <property type="project" value="MGI"/>
</dbReference>
<dbReference type="GO" id="GO:0005085">
    <property type="term" value="F:guanyl-nucleotide exchange factor activity"/>
    <property type="evidence" value="ECO:0000314"/>
    <property type="project" value="MGI"/>
</dbReference>
<dbReference type="GO" id="GO:0030291">
    <property type="term" value="F:protein serine/threonine kinase inhibitor activity"/>
    <property type="evidence" value="ECO:0000318"/>
    <property type="project" value="GO_Central"/>
</dbReference>
<dbReference type="GO" id="GO:0008344">
    <property type="term" value="P:adult locomotory behavior"/>
    <property type="evidence" value="ECO:0007669"/>
    <property type="project" value="Ensembl"/>
</dbReference>
<dbReference type="GO" id="GO:0048813">
    <property type="term" value="P:dendrite morphogenesis"/>
    <property type="evidence" value="ECO:0007669"/>
    <property type="project" value="Ensembl"/>
</dbReference>
<dbReference type="GO" id="GO:0007186">
    <property type="term" value="P:G protein-coupled receptor signaling pathway"/>
    <property type="evidence" value="ECO:0000314"/>
    <property type="project" value="MGI"/>
</dbReference>
<dbReference type="GO" id="GO:0032007">
    <property type="term" value="P:negative regulation of TOR signaling"/>
    <property type="evidence" value="ECO:0000318"/>
    <property type="project" value="GO_Central"/>
</dbReference>
<dbReference type="GO" id="GO:0043491">
    <property type="term" value="P:phosphatidylinositol 3-kinase/protein kinase B signal transduction"/>
    <property type="evidence" value="ECO:0007669"/>
    <property type="project" value="Ensembl"/>
</dbReference>
<dbReference type="GO" id="GO:0051056">
    <property type="term" value="P:regulation of small GTPase mediated signal transduction"/>
    <property type="evidence" value="ECO:0000304"/>
    <property type="project" value="Reactome"/>
</dbReference>
<dbReference type="CDD" id="cd04439">
    <property type="entry name" value="DEP_1_P-Rex"/>
    <property type="match status" value="1"/>
</dbReference>
<dbReference type="CDD" id="cd04440">
    <property type="entry name" value="DEP_2_P-Rex"/>
    <property type="match status" value="1"/>
</dbReference>
<dbReference type="CDD" id="cd06710">
    <property type="entry name" value="PDZ_RGS12-like"/>
    <property type="match status" value="1"/>
</dbReference>
<dbReference type="CDD" id="cd01224">
    <property type="entry name" value="PH_Collybistin_ASEF"/>
    <property type="match status" value="1"/>
</dbReference>
<dbReference type="CDD" id="cd00160">
    <property type="entry name" value="RhoGEF"/>
    <property type="match status" value="1"/>
</dbReference>
<dbReference type="FunFam" id="2.30.29.30:FF:000055">
    <property type="entry name" value="Phosphatidylinositol 3,4,5-trisphosphate-dependent Rac exchanger 1 protein-like"/>
    <property type="match status" value="1"/>
</dbReference>
<dbReference type="FunFam" id="1.20.900.10:FF:000018">
    <property type="entry name" value="Phosphatidylinositol-3,4, 5-trisphosphate-dependent Rac exchange factor 2, putative"/>
    <property type="match status" value="1"/>
</dbReference>
<dbReference type="FunFam" id="1.10.10.10:FF:000090">
    <property type="entry name" value="Phosphatidylinositol-3,4,5-trisphosphate dependent Rac exchange factor 1"/>
    <property type="match status" value="1"/>
</dbReference>
<dbReference type="FunFam" id="1.10.10.10:FF:000094">
    <property type="entry name" value="Phosphatidylinositol-3,4,5-trisphosphate dependent Rac exchange factor 1"/>
    <property type="match status" value="1"/>
</dbReference>
<dbReference type="FunFam" id="2.30.42.10:FF:000085">
    <property type="entry name" value="Phosphatidylinositol-3,4,5-trisphosphate dependent Rac exchange factor 2"/>
    <property type="match status" value="1"/>
</dbReference>
<dbReference type="FunFam" id="2.30.42.10:FF:000116">
    <property type="entry name" value="Phosphatidylinositol-3,4,5-trisphosphate dependent Rac exchange factor 2"/>
    <property type="match status" value="1"/>
</dbReference>
<dbReference type="Gene3D" id="2.30.42.10">
    <property type="match status" value="2"/>
</dbReference>
<dbReference type="Gene3D" id="1.20.900.10">
    <property type="entry name" value="Dbl homology (DH) domain"/>
    <property type="match status" value="1"/>
</dbReference>
<dbReference type="Gene3D" id="2.30.29.30">
    <property type="entry name" value="Pleckstrin-homology domain (PH domain)/Phosphotyrosine-binding domain (PTB)"/>
    <property type="match status" value="1"/>
</dbReference>
<dbReference type="Gene3D" id="1.10.10.10">
    <property type="entry name" value="Winged helix-like DNA-binding domain superfamily/Winged helix DNA-binding domain"/>
    <property type="match status" value="2"/>
</dbReference>
<dbReference type="InterPro" id="IPR035899">
    <property type="entry name" value="DBL_dom_sf"/>
</dbReference>
<dbReference type="InterPro" id="IPR000591">
    <property type="entry name" value="DEP_dom"/>
</dbReference>
<dbReference type="InterPro" id="IPR000219">
    <property type="entry name" value="DH_dom"/>
</dbReference>
<dbReference type="InterPro" id="IPR001331">
    <property type="entry name" value="GDS_CDC24_CS"/>
</dbReference>
<dbReference type="InterPro" id="IPR051832">
    <property type="entry name" value="mTOR-Rac_regulators"/>
</dbReference>
<dbReference type="InterPro" id="IPR001478">
    <property type="entry name" value="PDZ"/>
</dbReference>
<dbReference type="InterPro" id="IPR036034">
    <property type="entry name" value="PDZ_sf"/>
</dbReference>
<dbReference type="InterPro" id="IPR011993">
    <property type="entry name" value="PH-like_dom_sf"/>
</dbReference>
<dbReference type="InterPro" id="IPR001849">
    <property type="entry name" value="PH_domain"/>
</dbReference>
<dbReference type="InterPro" id="IPR037367">
    <property type="entry name" value="Rex2_DEP_1"/>
</dbReference>
<dbReference type="InterPro" id="IPR055251">
    <property type="entry name" value="SOS1_NGEF_PH"/>
</dbReference>
<dbReference type="InterPro" id="IPR036388">
    <property type="entry name" value="WH-like_DNA-bd_sf"/>
</dbReference>
<dbReference type="InterPro" id="IPR036390">
    <property type="entry name" value="WH_DNA-bd_sf"/>
</dbReference>
<dbReference type="PANTHER" id="PTHR22829">
    <property type="entry name" value="DEP DOMAIN PROTEIN"/>
    <property type="match status" value="1"/>
</dbReference>
<dbReference type="PANTHER" id="PTHR22829:SF1">
    <property type="entry name" value="PHOSPHATIDYLINOSITOL 3,4,5-TRISPHOSPHATE-DEPENDENT RAC EXCHANGER 2 PROTEIN"/>
    <property type="match status" value="1"/>
</dbReference>
<dbReference type="Pfam" id="PF00610">
    <property type="entry name" value="DEP"/>
    <property type="match status" value="2"/>
</dbReference>
<dbReference type="Pfam" id="PF00595">
    <property type="entry name" value="PDZ"/>
    <property type="match status" value="1"/>
</dbReference>
<dbReference type="Pfam" id="PF00621">
    <property type="entry name" value="RhoGEF"/>
    <property type="match status" value="1"/>
</dbReference>
<dbReference type="Pfam" id="PF22697">
    <property type="entry name" value="SOS1_NGEF_PH"/>
    <property type="match status" value="1"/>
</dbReference>
<dbReference type="SMART" id="SM00049">
    <property type="entry name" value="DEP"/>
    <property type="match status" value="2"/>
</dbReference>
<dbReference type="SMART" id="SM00228">
    <property type="entry name" value="PDZ"/>
    <property type="match status" value="2"/>
</dbReference>
<dbReference type="SMART" id="SM00233">
    <property type="entry name" value="PH"/>
    <property type="match status" value="1"/>
</dbReference>
<dbReference type="SMART" id="SM00325">
    <property type="entry name" value="RhoGEF"/>
    <property type="match status" value="1"/>
</dbReference>
<dbReference type="SUPFAM" id="SSF48065">
    <property type="entry name" value="DBL homology domain (DH-domain)"/>
    <property type="match status" value="1"/>
</dbReference>
<dbReference type="SUPFAM" id="SSF50156">
    <property type="entry name" value="PDZ domain-like"/>
    <property type="match status" value="2"/>
</dbReference>
<dbReference type="SUPFAM" id="SSF50729">
    <property type="entry name" value="PH domain-like"/>
    <property type="match status" value="1"/>
</dbReference>
<dbReference type="SUPFAM" id="SSF46785">
    <property type="entry name" value="Winged helix' DNA-binding domain"/>
    <property type="match status" value="2"/>
</dbReference>
<dbReference type="PROSITE" id="PS50186">
    <property type="entry name" value="DEP"/>
    <property type="match status" value="2"/>
</dbReference>
<dbReference type="PROSITE" id="PS00741">
    <property type="entry name" value="DH_1"/>
    <property type="match status" value="1"/>
</dbReference>
<dbReference type="PROSITE" id="PS50010">
    <property type="entry name" value="DH_2"/>
    <property type="match status" value="1"/>
</dbReference>
<dbReference type="PROSITE" id="PS50106">
    <property type="entry name" value="PDZ"/>
    <property type="match status" value="2"/>
</dbReference>
<dbReference type="PROSITE" id="PS50003">
    <property type="entry name" value="PH_DOMAIN"/>
    <property type="match status" value="1"/>
</dbReference>
<keyword id="KW-0002">3D-structure</keyword>
<keyword id="KW-0025">Alternative splicing</keyword>
<keyword id="KW-0344">Guanine-nucleotide releasing factor</keyword>
<keyword id="KW-1267">Proteomics identification</keyword>
<keyword id="KW-1185">Reference proteome</keyword>
<keyword id="KW-0677">Repeat</keyword>
<sequence>MSEDSRGDSRAESAKDLEKQLRLRVCVLSELQKTERDYVGTLEFLVSAFLHRMNQCAASKVDKNVTEETVKMLFSNIEDILAVHKEFLKVVEECLHPEPNAQQEVGTCFLHFKDKFRIYDEYCSNHEKAQKLLLELNKIRTIRTFLLNCMLLGGRKNTDVPLEGYLVTPIQRICKYPLILKELLKRTPRKHSDYAAVMEALQAMKAVCSNINEAKRQMEKLEVLEEWQSHIEGWEGSNITDTCTEMLMCGVLLKISSGNIQERVFFLFDNLLVYCKRKHRRLKNSKASTDGHRYLFRGRINTEVMEVENVDDGTADFHSSGHIVVNGWKIHNTAKNKWFVCMAKTPEEKHEWFEAILKERERRKGLKLGMEQDTWVMISEQGEKLYKMMCRQGNLIKDRKRKLTTFPKCFLGSEFVSWLLEIGEIHRPEEGVHLGQALLENGIIHHVTDKHQFKPEQMLYRFRYDDGTFYPRNEMQDVISKGVRLYCRLHSLFTPVIRDKDYHLRTYKSVVMANKLIDWLIAQGDCRTREEAMIFGVGLCDNGFMHHVLEKSEFKDEPLLFRFFSDEEMEGSNMKHRLMKHDLKVVENVIAKSLLIKSNEGSYGFGLEDKNKVPIIKLVEKGSNAEMAGMEVGKKIFAINGDLVFMRPFNEVDCFLKSCLNSRKPLRVLVSTKPRETVKIPDSADGLGFQIRGFGPSVVHAVGRGTVAAAAGLHPGQCIIKVNGINVSKETHASVIAHVTACRKYRRPTKQDSIQWVYNSIESAQEDLQKSHSKPPGDEAGDAFDCKVEEVIDKFNTMAIIDGKKEHVSLTVDNVHLEYGVVYEYDSTAGIKCNVVEKMIEPKGFFSLTAKILEALAKSDEHFVQNCTSLNSLNEVIPTDLQSKFSALCSERIEHLCQRISSYKKFSRVLKNRAWPTFKQAKSKISPLHSSDFCPTNCHVNVMEVSYPKTSTSLGSAFGVQLDSRKHNSHDKENKSSEQGKLSPMVYIQHTITTMAAPSGLSLGQQDGHGLRYLLKEEDLETQDIYQKLLGKLQTALKEVEMCVCQIDDLLSSITYSPKLERKTSEGIIPTDSDNEKGERNSKRVCFNVAGDEQEDSGHDTISNRDSYSDCNSNRNSIASFTSICSSQCSSYFHSDEMDSGDELPLSVRISHDKQDKIHSCLEHLFSQVDSITNLLKGQAVVRAFDQTKYLTPGRGLQEFQQEMEPKLSCPKRLRLHIKQDPWNLPSSVRTLAQNIRKFVEEVKCRLLLALLEYSDSETQLRRDMVFCQTLVATVCAFSEQLMAALNQMFDNSKENEMETWEASRRWLDQIANAGVLFHFQSLLSPNLTDEQAMLEDTLVALFDLEKVSFYFKPSEEEPLVANVPLTYQAEGSRQALKVYFYIDSYHFEQLPQRLKNGGGFKIHPVLFAQALESMEGYYYRDNVSVEEFQAQINAASLEKVKQYNQKLRAFYLDKSNSPPNSTSKAAYVDKLMRPLNALDELYRLVASFIRSKRTAACANTACSASGVGLLSVSSELCNRLGACHIIMCSSGVHRCTLSVTLEQAIILARSHGLPPRYIMQATDVMRKQGARVQNTAKNLGVRDRTPQSAPRLYKLCEPPPPAGEE</sequence>
<evidence type="ECO:0000255" key="1">
    <source>
        <dbReference type="PROSITE-ProRule" id="PRU00062"/>
    </source>
</evidence>
<evidence type="ECO:0000255" key="2">
    <source>
        <dbReference type="PROSITE-ProRule" id="PRU00066"/>
    </source>
</evidence>
<evidence type="ECO:0000255" key="3">
    <source>
        <dbReference type="PROSITE-ProRule" id="PRU00143"/>
    </source>
</evidence>
<evidence type="ECO:0000255" key="4">
    <source>
        <dbReference type="PROSITE-ProRule" id="PRU00145"/>
    </source>
</evidence>
<evidence type="ECO:0000256" key="5">
    <source>
        <dbReference type="SAM" id="MobiDB-lite"/>
    </source>
</evidence>
<evidence type="ECO:0000269" key="6">
    <source>
    </source>
</evidence>
<evidence type="ECO:0000269" key="7">
    <source>
    </source>
</evidence>
<evidence type="ECO:0000269" key="8">
    <source>
    </source>
</evidence>
<evidence type="ECO:0000269" key="9">
    <source>
    </source>
</evidence>
<evidence type="ECO:0000303" key="10">
    <source>
    </source>
</evidence>
<evidence type="ECO:0000303" key="11">
    <source ref="2"/>
</evidence>
<evidence type="ECO:0000305" key="12"/>
<evidence type="ECO:0000312" key="13">
    <source>
        <dbReference type="HGNC" id="HGNC:22950"/>
    </source>
</evidence>
<evidence type="ECO:0007829" key="14">
    <source>
        <dbReference type="PDB" id="6BNM"/>
    </source>
</evidence>
<accession>Q70Z35</accession>
<accession>B4DFX0</accession>
<accession>Q32KL0</accession>
<accession>Q32KL1</accession>
<accession>Q6R7Q3</accession>
<accession>Q6R7Q4</accession>
<accession>Q9H805</accession>
<accession>Q9H961</accession>
<feature type="chain" id="PRO_0000286795" description="Phosphatidylinositol 3,4,5-trisphosphate-dependent Rac exchanger 2 protein">
    <location>
        <begin position="1"/>
        <end position="1606"/>
    </location>
</feature>
<feature type="domain" description="DH" evidence="1">
    <location>
        <begin position="23"/>
        <end position="214"/>
    </location>
</feature>
<feature type="domain" description="PH" evidence="4">
    <location>
        <begin position="245"/>
        <end position="361"/>
    </location>
</feature>
<feature type="domain" description="DEP 1" evidence="2">
    <location>
        <begin position="390"/>
        <end position="464"/>
    </location>
</feature>
<feature type="domain" description="DEP 2" evidence="2">
    <location>
        <begin position="491"/>
        <end position="566"/>
    </location>
</feature>
<feature type="domain" description="PDZ 1" evidence="3">
    <location>
        <begin position="592"/>
        <end position="671"/>
    </location>
</feature>
<feature type="domain" description="PDZ 2" evidence="3">
    <location>
        <begin position="677"/>
        <end position="754"/>
    </location>
</feature>
<feature type="region of interest" description="Disordered" evidence="5">
    <location>
        <begin position="1581"/>
        <end position="1606"/>
    </location>
</feature>
<feature type="splice variant" id="VSP_055612" description="In isoform 4." evidence="10">
    <location>
        <begin position="48"/>
        <end position="112"/>
    </location>
</feature>
<feature type="splice variant" id="VSP_025150" description="In isoform 3." evidence="10 11">
    <original>FSRVLKNRAWPTFKQAKSKISPLHSSDFCPTNCHVNVMEVSYPKTSTSLGSAFGVQLDSRKHNSHDKENKSSEQ</original>
    <variation>VQASERFYNFTARHAVWEHSFDLHSVSSTFPVPVTMEFLLLPPPLLGISQDGRQHCIPEDLPSQEMLLAERAPV</variation>
    <location>
        <begin position="906"/>
        <end position="979"/>
    </location>
</feature>
<feature type="splice variant" id="VSP_025152" description="In isoform 3." evidence="10 11">
    <location>
        <begin position="980"/>
        <end position="1606"/>
    </location>
</feature>
<feature type="splice variant" id="VSP_055613" description="In isoform 4." evidence="10">
    <original>D</original>
    <variation>E</variation>
    <location>
        <position position="1049"/>
    </location>
</feature>
<feature type="splice variant" id="VSP_055614" description="In isoform 4." evidence="10">
    <location>
        <begin position="1050"/>
        <end position="1606"/>
    </location>
</feature>
<feature type="sequence variant" id="VAR_032163" description="In dbSNP:rs11784582.">
    <original>D</original>
    <variation>N</variation>
    <location>
        <position position="312"/>
    </location>
</feature>
<feature type="sequence variant" id="VAR_035973" description="In a colorectal cancer sample; somatic mutation; dbSNP:rs147538692." evidence="9">
    <original>V</original>
    <variation>I</variation>
    <location>
        <position position="537"/>
    </location>
</feature>
<feature type="sequence variant" id="VAR_035974" description="In a colorectal cancer sample; somatic mutation." evidence="9">
    <original>A</original>
    <variation>E</variation>
    <location>
        <position position="1571"/>
    </location>
</feature>
<feature type="sequence conflict" description="In Ref. 2; AAS82571/AAS82572." evidence="12" ref="2">
    <original>T</original>
    <variation>I</variation>
    <location>
        <position position="158"/>
    </location>
</feature>
<feature type="sequence conflict" description="In Ref. 2; AAS82571 and 4; AK024079." evidence="12" ref="2 4">
    <original>E</original>
    <variation>V</variation>
    <location>
        <position position="1076"/>
    </location>
</feature>
<feature type="sequence conflict" description="In Ref. 2; AAS82571." evidence="12" ref="2">
    <original>C</original>
    <variation>R</variation>
    <location>
        <position position="1268"/>
    </location>
</feature>
<feature type="helix" evidence="14">
    <location>
        <begin position="219"/>
        <end position="229"/>
    </location>
</feature>
<feature type="helix" evidence="14">
    <location>
        <begin position="239"/>
        <end position="241"/>
    </location>
</feature>
<feature type="strand" evidence="14">
    <location>
        <begin position="246"/>
        <end position="256"/>
    </location>
</feature>
<feature type="strand" evidence="14">
    <location>
        <begin position="259"/>
        <end position="268"/>
    </location>
</feature>
<feature type="strand" evidence="14">
    <location>
        <begin position="271"/>
        <end position="276"/>
    </location>
</feature>
<feature type="strand" evidence="14">
    <location>
        <begin position="294"/>
        <end position="301"/>
    </location>
</feature>
<feature type="helix" evidence="14">
    <location>
        <begin position="302"/>
        <end position="304"/>
    </location>
</feature>
<feature type="strand" evidence="14">
    <location>
        <begin position="305"/>
        <end position="309"/>
    </location>
</feature>
<feature type="strand" evidence="14">
    <location>
        <begin position="314"/>
        <end position="316"/>
    </location>
</feature>
<feature type="strand" evidence="14">
    <location>
        <begin position="322"/>
        <end position="332"/>
    </location>
</feature>
<feature type="turn" evidence="14">
    <location>
        <begin position="333"/>
        <end position="336"/>
    </location>
</feature>
<feature type="strand" evidence="14">
    <location>
        <begin position="337"/>
        <end position="342"/>
    </location>
</feature>
<feature type="helix" evidence="14">
    <location>
        <begin position="346"/>
        <end position="364"/>
    </location>
</feature>
<name>PREX2_HUMAN</name>
<comment type="function">
    <text evidence="6 7 8">Functions as a RAC1 guanine nucleotide exchange factor (GEF), activating Rac proteins by exchanging bound GDP for free GTP. Its activity is synergistically activated by phosphatidylinositol 3,4,5-trisphosphate and the beta gamma subunits of heterotrimeric G protein. Mediates the activation of RAC1 in a PI3K-dependent manner. May be an important mediator of Rac signaling, acting directly downstream of both G protein-coupled receptors and phosphoinositide 3-kinase.</text>
</comment>
<comment type="subunit">
    <text>Interacts with RAC1.</text>
</comment>
<comment type="alternative products">
    <event type="alternative splicing"/>
    <isoform>
        <id>Q70Z35-1</id>
        <name>1</name>
        <name>P-Rex2</name>
        <sequence type="displayed"/>
    </isoform>
    <isoform>
        <id>Q70Z35-3</id>
        <name>3</name>
        <sequence type="described" ref="VSP_025150 VSP_025152"/>
    </isoform>
    <isoform>
        <id>Q70Z35-4</id>
        <name>4</name>
        <sequence type="described" ref="VSP_055612 VSP_055613 VSP_055614"/>
    </isoform>
</comment>
<comment type="tissue specificity">
    <text evidence="7">Isoform 1 is highly expressed in skeletal muscle, heart and placenta, absent from peripheral blood leukocytes. Isoform 2 is expressed in skeletal muscle, kidney, small intestine, and placenta. Isoform 3 is expressed in the heart.</text>
</comment>
<comment type="domain">
    <text>PH domain confers substrate specificity and recognition. Able to discriminate between RAC1, RHOA, and CDC42.</text>
</comment>
<comment type="domain">
    <text>DH domain alone was unable to confer substrate specificity and recognition.</text>
</comment>
<comment type="sequence caution" evidence="12">
    <conflict type="frameshift">
        <sequence resource="EMBL" id="AK024079"/>
    </conflict>
</comment>
<comment type="sequence caution" evidence="12">
    <conflict type="erroneous initiation">
        <sequence resource="EMBL-CDS" id="BAB14375"/>
    </conflict>
    <text>Truncated N-terminus.</text>
</comment>
<comment type="sequence caution" evidence="12">
    <conflict type="erroneous initiation">
        <sequence resource="EMBL-CDS" id="BAG57581"/>
    </conflict>
    <text>Truncated N-terminus.</text>
</comment>
<comment type="sequence caution" evidence="12">
    <conflict type="miscellaneous discrepancy">
        <sequence resource="EMBL-CDS" id="DAA05334"/>
    </conflict>
    <text>Non-canonical splice intron-exon junction.</text>
</comment>
<proteinExistence type="evidence at protein level"/>
<protein>
    <recommendedName>
        <fullName evidence="12">Phosphatidylinositol 3,4,5-trisphosphate-dependent Rac exchanger 2 protein</fullName>
        <shortName>P-Rex2</shortName>
        <shortName>PtdIns(3,4,5)-dependent Rac exchanger 2</shortName>
    </recommendedName>
    <alternativeName>
        <fullName>DEP domain-containing protein 2</fullName>
    </alternativeName>
</protein>
<organism>
    <name type="scientific">Homo sapiens</name>
    <name type="common">Human</name>
    <dbReference type="NCBI Taxonomy" id="9606"/>
    <lineage>
        <taxon>Eukaryota</taxon>
        <taxon>Metazoa</taxon>
        <taxon>Chordata</taxon>
        <taxon>Craniata</taxon>
        <taxon>Vertebrata</taxon>
        <taxon>Euteleostomi</taxon>
        <taxon>Mammalia</taxon>
        <taxon>Eutheria</taxon>
        <taxon>Euarchontoglires</taxon>
        <taxon>Primates</taxon>
        <taxon>Haplorrhini</taxon>
        <taxon>Catarrhini</taxon>
        <taxon>Hominidae</taxon>
        <taxon>Homo</taxon>
    </lineage>
</organism>